<reference key="1">
    <citation type="journal article" date="2000" name="Science">
        <title>The genome sequence of Drosophila melanogaster.</title>
        <authorList>
            <person name="Adams M.D."/>
            <person name="Celniker S.E."/>
            <person name="Holt R.A."/>
            <person name="Evans C.A."/>
            <person name="Gocayne J.D."/>
            <person name="Amanatides P.G."/>
            <person name="Scherer S.E."/>
            <person name="Li P.W."/>
            <person name="Hoskins R.A."/>
            <person name="Galle R.F."/>
            <person name="George R.A."/>
            <person name="Lewis S.E."/>
            <person name="Richards S."/>
            <person name="Ashburner M."/>
            <person name="Henderson S.N."/>
            <person name="Sutton G.G."/>
            <person name="Wortman J.R."/>
            <person name="Yandell M.D."/>
            <person name="Zhang Q."/>
            <person name="Chen L.X."/>
            <person name="Brandon R.C."/>
            <person name="Rogers Y.-H.C."/>
            <person name="Blazej R.G."/>
            <person name="Champe M."/>
            <person name="Pfeiffer B.D."/>
            <person name="Wan K.H."/>
            <person name="Doyle C."/>
            <person name="Baxter E.G."/>
            <person name="Helt G."/>
            <person name="Nelson C.R."/>
            <person name="Miklos G.L.G."/>
            <person name="Abril J.F."/>
            <person name="Agbayani A."/>
            <person name="An H.-J."/>
            <person name="Andrews-Pfannkoch C."/>
            <person name="Baldwin D."/>
            <person name="Ballew R.M."/>
            <person name="Basu A."/>
            <person name="Baxendale J."/>
            <person name="Bayraktaroglu L."/>
            <person name="Beasley E.M."/>
            <person name="Beeson K.Y."/>
            <person name="Benos P.V."/>
            <person name="Berman B.P."/>
            <person name="Bhandari D."/>
            <person name="Bolshakov S."/>
            <person name="Borkova D."/>
            <person name="Botchan M.R."/>
            <person name="Bouck J."/>
            <person name="Brokstein P."/>
            <person name="Brottier P."/>
            <person name="Burtis K.C."/>
            <person name="Busam D.A."/>
            <person name="Butler H."/>
            <person name="Cadieu E."/>
            <person name="Center A."/>
            <person name="Chandra I."/>
            <person name="Cherry J.M."/>
            <person name="Cawley S."/>
            <person name="Dahlke C."/>
            <person name="Davenport L.B."/>
            <person name="Davies P."/>
            <person name="de Pablos B."/>
            <person name="Delcher A."/>
            <person name="Deng Z."/>
            <person name="Mays A.D."/>
            <person name="Dew I."/>
            <person name="Dietz S.M."/>
            <person name="Dodson K."/>
            <person name="Doup L.E."/>
            <person name="Downes M."/>
            <person name="Dugan-Rocha S."/>
            <person name="Dunkov B.C."/>
            <person name="Dunn P."/>
            <person name="Durbin K.J."/>
            <person name="Evangelista C.C."/>
            <person name="Ferraz C."/>
            <person name="Ferriera S."/>
            <person name="Fleischmann W."/>
            <person name="Fosler C."/>
            <person name="Gabrielian A.E."/>
            <person name="Garg N.S."/>
            <person name="Gelbart W.M."/>
            <person name="Glasser K."/>
            <person name="Glodek A."/>
            <person name="Gong F."/>
            <person name="Gorrell J.H."/>
            <person name="Gu Z."/>
            <person name="Guan P."/>
            <person name="Harris M."/>
            <person name="Harris N.L."/>
            <person name="Harvey D.A."/>
            <person name="Heiman T.J."/>
            <person name="Hernandez J.R."/>
            <person name="Houck J."/>
            <person name="Hostin D."/>
            <person name="Houston K.A."/>
            <person name="Howland T.J."/>
            <person name="Wei M.-H."/>
            <person name="Ibegwam C."/>
            <person name="Jalali M."/>
            <person name="Kalush F."/>
            <person name="Karpen G.H."/>
            <person name="Ke Z."/>
            <person name="Kennison J.A."/>
            <person name="Ketchum K.A."/>
            <person name="Kimmel B.E."/>
            <person name="Kodira C.D."/>
            <person name="Kraft C.L."/>
            <person name="Kravitz S."/>
            <person name="Kulp D."/>
            <person name="Lai Z."/>
            <person name="Lasko P."/>
            <person name="Lei Y."/>
            <person name="Levitsky A.A."/>
            <person name="Li J.H."/>
            <person name="Li Z."/>
            <person name="Liang Y."/>
            <person name="Lin X."/>
            <person name="Liu X."/>
            <person name="Mattei B."/>
            <person name="McIntosh T.C."/>
            <person name="McLeod M.P."/>
            <person name="McPherson D."/>
            <person name="Merkulov G."/>
            <person name="Milshina N.V."/>
            <person name="Mobarry C."/>
            <person name="Morris J."/>
            <person name="Moshrefi A."/>
            <person name="Mount S.M."/>
            <person name="Moy M."/>
            <person name="Murphy B."/>
            <person name="Murphy L."/>
            <person name="Muzny D.M."/>
            <person name="Nelson D.L."/>
            <person name="Nelson D.R."/>
            <person name="Nelson K.A."/>
            <person name="Nixon K."/>
            <person name="Nusskern D.R."/>
            <person name="Pacleb J.M."/>
            <person name="Palazzolo M."/>
            <person name="Pittman G.S."/>
            <person name="Pan S."/>
            <person name="Pollard J."/>
            <person name="Puri V."/>
            <person name="Reese M.G."/>
            <person name="Reinert K."/>
            <person name="Remington K."/>
            <person name="Saunders R.D.C."/>
            <person name="Scheeler F."/>
            <person name="Shen H."/>
            <person name="Shue B.C."/>
            <person name="Siden-Kiamos I."/>
            <person name="Simpson M."/>
            <person name="Skupski M.P."/>
            <person name="Smith T.J."/>
            <person name="Spier E."/>
            <person name="Spradling A.C."/>
            <person name="Stapleton M."/>
            <person name="Strong R."/>
            <person name="Sun E."/>
            <person name="Svirskas R."/>
            <person name="Tector C."/>
            <person name="Turner R."/>
            <person name="Venter E."/>
            <person name="Wang A.H."/>
            <person name="Wang X."/>
            <person name="Wang Z.-Y."/>
            <person name="Wassarman D.A."/>
            <person name="Weinstock G.M."/>
            <person name="Weissenbach J."/>
            <person name="Williams S.M."/>
            <person name="Woodage T."/>
            <person name="Worley K.C."/>
            <person name="Wu D."/>
            <person name="Yang S."/>
            <person name="Yao Q.A."/>
            <person name="Ye J."/>
            <person name="Yeh R.-F."/>
            <person name="Zaveri J.S."/>
            <person name="Zhan M."/>
            <person name="Zhang G."/>
            <person name="Zhao Q."/>
            <person name="Zheng L."/>
            <person name="Zheng X.H."/>
            <person name="Zhong F.N."/>
            <person name="Zhong W."/>
            <person name="Zhou X."/>
            <person name="Zhu S.C."/>
            <person name="Zhu X."/>
            <person name="Smith H.O."/>
            <person name="Gibbs R.A."/>
            <person name="Myers E.W."/>
            <person name="Rubin G.M."/>
            <person name="Venter J.C."/>
        </authorList>
    </citation>
    <scope>NUCLEOTIDE SEQUENCE [LARGE SCALE GENOMIC DNA]</scope>
    <source>
        <strain>Berkeley</strain>
    </source>
</reference>
<reference key="2">
    <citation type="journal article" date="2002" name="Genome Biol.">
        <title>Annotation of the Drosophila melanogaster euchromatic genome: a systematic review.</title>
        <authorList>
            <person name="Misra S."/>
            <person name="Crosby M.A."/>
            <person name="Mungall C.J."/>
            <person name="Matthews B.B."/>
            <person name="Campbell K.S."/>
            <person name="Hradecky P."/>
            <person name="Huang Y."/>
            <person name="Kaminker J.S."/>
            <person name="Millburn G.H."/>
            <person name="Prochnik S.E."/>
            <person name="Smith C.D."/>
            <person name="Tupy J.L."/>
            <person name="Whitfield E.J."/>
            <person name="Bayraktaroglu L."/>
            <person name="Berman B.P."/>
            <person name="Bettencourt B.R."/>
            <person name="Celniker S.E."/>
            <person name="de Grey A.D.N.J."/>
            <person name="Drysdale R.A."/>
            <person name="Harris N.L."/>
            <person name="Richter J."/>
            <person name="Russo S."/>
            <person name="Schroeder A.J."/>
            <person name="Shu S.Q."/>
            <person name="Stapleton M."/>
            <person name="Yamada C."/>
            <person name="Ashburner M."/>
            <person name="Gelbart W.M."/>
            <person name="Rubin G.M."/>
            <person name="Lewis S.E."/>
        </authorList>
    </citation>
    <scope>GENOME REANNOTATION</scope>
    <source>
        <strain>Berkeley</strain>
    </source>
</reference>
<reference key="3">
    <citation type="submission" date="2003-02" db="EMBL/GenBank/DDBJ databases">
        <authorList>
            <person name="Stapleton M."/>
            <person name="Brokstein P."/>
            <person name="Hong L."/>
            <person name="Agbayani A."/>
            <person name="Carlson J.W."/>
            <person name="Champe M."/>
            <person name="Chavez C."/>
            <person name="Dorsett V."/>
            <person name="Dresnek D."/>
            <person name="Farfan D."/>
            <person name="Frise E."/>
            <person name="George R.A."/>
            <person name="Gonzalez M."/>
            <person name="Guarin H."/>
            <person name="Kronmiller B."/>
            <person name="Li P.W."/>
            <person name="Liao G."/>
            <person name="Miranda A."/>
            <person name="Mungall C.J."/>
            <person name="Nunoo J."/>
            <person name="Pacleb J.M."/>
            <person name="Paragas V."/>
            <person name="Park S."/>
            <person name="Patel S."/>
            <person name="Phouanenavong S."/>
            <person name="Wan K.H."/>
            <person name="Yu C."/>
            <person name="Lewis S.E."/>
            <person name="Rubin G.M."/>
            <person name="Celniker S.E."/>
        </authorList>
    </citation>
    <scope>NUCLEOTIDE SEQUENCE [LARGE SCALE MRNA] OF 1-310</scope>
    <source>
        <strain>Berkeley</strain>
        <tissue>Embryo</tissue>
    </source>
</reference>
<reference key="4">
    <citation type="journal article" date="2008" name="J. Proteome Res.">
        <title>Phosphoproteome analysis of Drosophila melanogaster embryos.</title>
        <authorList>
            <person name="Zhai B."/>
            <person name="Villen J."/>
            <person name="Beausoleil S.A."/>
            <person name="Mintseris J."/>
            <person name="Gygi S.P."/>
        </authorList>
    </citation>
    <scope>PHOSPHORYLATION [LARGE SCALE ANALYSIS] AT SER-189; SER-191 AND THR-195</scope>
    <scope>IDENTIFICATION BY MASS SPECTROMETRY</scope>
    <source>
        <tissue>Embryo</tissue>
    </source>
</reference>
<reference key="5">
    <citation type="journal article" date="2007" name="Mol. Biosyst.">
        <title>An integrated chemical, mass spectrometric and computational strategy for (quantitative) phosphoproteomics: application to Drosophila melanogaster Kc167 cells.</title>
        <authorList>
            <person name="Bodenmiller B."/>
            <person name="Mueller L.N."/>
            <person name="Pedrioli P.G.A."/>
            <person name="Pflieger D."/>
            <person name="Juenger M.A."/>
            <person name="Eng J.K."/>
            <person name="Aebersold R."/>
            <person name="Tao W.A."/>
        </authorList>
    </citation>
    <scope>PHOSPHORYLATION [LARGE SCALE ANALYSIS] AT SER-136</scope>
    <scope>IDENTIFICATION BY MASS SPECTROMETRY</scope>
</reference>
<reference key="6">
    <citation type="journal article" date="2024" name="J. Mol. Cell Biol.">
        <title>Impaired dNKAP function drives genome instability and tumorigenic growth in Drosophila epithelia.</title>
        <authorList>
            <person name="Guo T."/>
            <person name="Miao C."/>
            <person name="Liu Z."/>
            <person name="Duan J."/>
            <person name="Ma Y."/>
            <person name="Zhang X."/>
            <person name="Yang W."/>
            <person name="Xue M."/>
            <person name="Deng Q."/>
            <person name="Guo P."/>
            <person name="Xi Y."/>
            <person name="Yang X."/>
            <person name="Huang X."/>
            <person name="Ge W."/>
        </authorList>
    </citation>
    <scope>FUNCTION</scope>
    <scope>SUBCELLULAR LOCATION</scope>
    <scope>DEVELOPMENTAL STAGE</scope>
    <scope>DISRUPTION PHENOTYPE</scope>
</reference>
<sequence length="463" mass="52948">MRSRSRSRSRQRERRRSDSRARSRSERRTYQKPQHRRSVSRERKRERDRELHRERTSNRSSRRSREKDAVPRRRRTRSSPSRSSSSSSSDRSSSSRSPSRSRKSRPKSVERWPNDRYHENNDRRQNPFRGRAPEGSFINDPAEPSFRSQHRGRGSSNHQFKGDSKAVNARRNQRVLIGEEGVPEVWGKSPSRPETDDVELVKGSYIGPKKKKKKGKRKHKKSEKKSKKKSKKSKKKKSKQESSSSSSSSSSEDSSDESSSSSSSSSSDSEDESEEEDVWLEKTADGIKKPKKKKSSTSKKDKKSKKKKKKRKSEAEKSKKSSSSSASKSKNKESASHNDEDVGPSLRPGGSLNQKDFGKALLPGEGAAMAAYIAEGKRIPRRGEIGLTSDEIANFESVGYVMSGSRHRRMEAVRIRKENQLYSADEKRALAMFSKEERQKRENKILSQFKDMIHSKLQAKDKK</sequence>
<evidence type="ECO:0000256" key="1">
    <source>
        <dbReference type="SAM" id="MobiDB-lite"/>
    </source>
</evidence>
<evidence type="ECO:0000269" key="2">
    <source>
    </source>
</evidence>
<evidence type="ECO:0000269" key="3">
    <source>
    </source>
</evidence>
<evidence type="ECO:0000269" key="4">
    <source>
    </source>
</evidence>
<evidence type="ECO:0000303" key="5">
    <source>
    </source>
</evidence>
<evidence type="ECO:0000305" key="6"/>
<evidence type="ECO:0000312" key="7">
    <source>
        <dbReference type="FlyBase" id="FBgn0039488"/>
    </source>
</evidence>
<gene>
    <name evidence="7" type="primary">Nkap</name>
    <name evidence="7" type="ORF">CG6066</name>
</gene>
<organism evidence="7">
    <name type="scientific">Drosophila melanogaster</name>
    <name type="common">Fruit fly</name>
    <dbReference type="NCBI Taxonomy" id="7227"/>
    <lineage>
        <taxon>Eukaryota</taxon>
        <taxon>Metazoa</taxon>
        <taxon>Ecdysozoa</taxon>
        <taxon>Arthropoda</taxon>
        <taxon>Hexapoda</taxon>
        <taxon>Insecta</taxon>
        <taxon>Pterygota</taxon>
        <taxon>Neoptera</taxon>
        <taxon>Endopterygota</taxon>
        <taxon>Diptera</taxon>
        <taxon>Brachycera</taxon>
        <taxon>Muscomorpha</taxon>
        <taxon>Ephydroidea</taxon>
        <taxon>Drosophilidae</taxon>
        <taxon>Drosophila</taxon>
        <taxon>Sophophora</taxon>
    </lineage>
</organism>
<protein>
    <recommendedName>
        <fullName evidence="6">NF-kappa-B-activating protein</fullName>
        <shortName evidence="7">NFKB activating protein</shortName>
        <shortName evidence="5">dNKAP</shortName>
    </recommendedName>
</protein>
<accession>Q9VB74</accession>
<accession>Q86P49</accession>
<keyword id="KW-0539">Nucleus</keyword>
<keyword id="KW-0597">Phosphoprotein</keyword>
<keyword id="KW-1185">Reference proteome</keyword>
<keyword id="KW-0043">Tumor suppressor</keyword>
<comment type="function">
    <text evidence="4">Tumor suppressor involved in maintaining genome integrity (PubMed:38059855). Influences gene expression and mRNA splicing (PubMed:38059855).</text>
</comment>
<comment type="subcellular location">
    <subcellularLocation>
        <location evidence="4">Nucleus</location>
    </subcellularLocation>
</comment>
<comment type="developmental stage">
    <text evidence="4">Expressed in mitotic wing imaginal disc cells and non-mitotic polyploid salivary gland cells in third instar larvae.</text>
</comment>
<comment type="disruption phenotype">
    <text evidence="4">Late embryonic to early larval lethal (PubMed:38059855). RNAi-mediated knockdown in the wing imaginal discs causes a developmental delay of 1 to 2 days and results in viable adults with small crumpled wings possessing extra vein tissue (PubMed:38059855). Larval imaginal discs show tissue overgrowth with loss of tissue architecture and formation of multilayered epithelia, characteristics of tumorigenesis; cells show increased invasiveness, loss of polarity, increased levels of R-loop-associated genome instability and increased levels of c-Jun N-terminal kinase-induced apoptosis (PubMed:38059855).</text>
</comment>
<comment type="similarity">
    <text evidence="6">Belongs to the NKAP family.</text>
</comment>
<comment type="sequence caution" evidence="6">
    <conflict type="erroneous initiation">
        <sequence resource="EMBL-CDS" id="AAO39488"/>
    </conflict>
</comment>
<name>NKAP_DROME</name>
<proteinExistence type="evidence at protein level"/>
<feature type="chain" id="PRO_0000372660" description="NF-kappa-B-activating protein">
    <location>
        <begin position="1"/>
        <end position="463"/>
    </location>
</feature>
<feature type="region of interest" description="Disordered" evidence="1">
    <location>
        <begin position="1"/>
        <end position="358"/>
    </location>
</feature>
<feature type="compositionally biased region" description="Basic residues" evidence="1">
    <location>
        <begin position="1"/>
        <end position="14"/>
    </location>
</feature>
<feature type="compositionally biased region" description="Basic and acidic residues" evidence="1">
    <location>
        <begin position="15"/>
        <end position="29"/>
    </location>
</feature>
<feature type="compositionally biased region" description="Basic and acidic residues" evidence="1">
    <location>
        <begin position="39"/>
        <end position="71"/>
    </location>
</feature>
<feature type="compositionally biased region" description="Low complexity" evidence="1">
    <location>
        <begin position="78"/>
        <end position="98"/>
    </location>
</feature>
<feature type="compositionally biased region" description="Basic and acidic residues" evidence="1">
    <location>
        <begin position="107"/>
        <end position="125"/>
    </location>
</feature>
<feature type="compositionally biased region" description="Basic residues" evidence="1">
    <location>
        <begin position="208"/>
        <end position="238"/>
    </location>
</feature>
<feature type="compositionally biased region" description="Low complexity" evidence="1">
    <location>
        <begin position="241"/>
        <end position="267"/>
    </location>
</feature>
<feature type="compositionally biased region" description="Acidic residues" evidence="1">
    <location>
        <begin position="268"/>
        <end position="278"/>
    </location>
</feature>
<feature type="compositionally biased region" description="Basic and acidic residues" evidence="1">
    <location>
        <begin position="279"/>
        <end position="288"/>
    </location>
</feature>
<feature type="compositionally biased region" description="Basic residues" evidence="1">
    <location>
        <begin position="289"/>
        <end position="312"/>
    </location>
</feature>
<feature type="compositionally biased region" description="Basic and acidic residues" evidence="1">
    <location>
        <begin position="330"/>
        <end position="340"/>
    </location>
</feature>
<feature type="modified residue" description="Phosphoserine" evidence="2">
    <location>
        <position position="136"/>
    </location>
</feature>
<feature type="modified residue" description="Phosphoserine" evidence="3">
    <location>
        <position position="189"/>
    </location>
</feature>
<feature type="modified residue" description="Phosphoserine" evidence="3">
    <location>
        <position position="191"/>
    </location>
</feature>
<feature type="modified residue" description="Phosphothreonine" evidence="3">
    <location>
        <position position="195"/>
    </location>
</feature>
<feature type="sequence conflict" description="In Ref. 3; AAO39488." evidence="6" ref="3">
    <original>S</original>
    <variation>L</variation>
    <location>
        <position position="61"/>
    </location>
</feature>
<feature type="sequence conflict" description="In Ref. 3; AAO39488." evidence="6" ref="3">
    <original>F</original>
    <variation>S</variation>
    <location>
        <position position="146"/>
    </location>
</feature>
<dbReference type="EMBL" id="AE014297">
    <property type="protein sequence ID" value="AAF56669.1"/>
    <property type="molecule type" value="Genomic_DNA"/>
</dbReference>
<dbReference type="EMBL" id="BT003485">
    <property type="protein sequence ID" value="AAO39488.1"/>
    <property type="status" value="ALT_INIT"/>
    <property type="molecule type" value="mRNA"/>
</dbReference>
<dbReference type="RefSeq" id="NP_651538.1">
    <property type="nucleotide sequence ID" value="NM_143281.2"/>
</dbReference>
<dbReference type="SMR" id="Q9VB74"/>
<dbReference type="BioGRID" id="68156">
    <property type="interactions" value="9"/>
</dbReference>
<dbReference type="FunCoup" id="Q9VB74">
    <property type="interactions" value="446"/>
</dbReference>
<dbReference type="IntAct" id="Q9VB74">
    <property type="interactions" value="9"/>
</dbReference>
<dbReference type="STRING" id="7227.FBpp0084501"/>
<dbReference type="iPTMnet" id="Q9VB74"/>
<dbReference type="PaxDb" id="7227-FBpp0084501"/>
<dbReference type="EnsemblMetazoa" id="FBtr0085131">
    <property type="protein sequence ID" value="FBpp0084501"/>
    <property type="gene ID" value="FBgn0039488"/>
</dbReference>
<dbReference type="GeneID" id="43267"/>
<dbReference type="KEGG" id="dme:Dmel_CG6066"/>
<dbReference type="UCSC" id="CG6066-RA">
    <property type="organism name" value="d. melanogaster"/>
</dbReference>
<dbReference type="AGR" id="FB:FBgn0039488"/>
<dbReference type="FlyBase" id="FBgn0039488">
    <property type="gene designation" value="Nkap"/>
</dbReference>
<dbReference type="VEuPathDB" id="VectorBase:FBgn0039488"/>
<dbReference type="eggNOG" id="KOG2812">
    <property type="taxonomic scope" value="Eukaryota"/>
</dbReference>
<dbReference type="GeneTree" id="ENSGT00940000165950"/>
<dbReference type="HOGENOM" id="CLU_032439_1_0_1"/>
<dbReference type="InParanoid" id="Q9VB74"/>
<dbReference type="OMA" id="MMPGEAD"/>
<dbReference type="OrthoDB" id="273141at2759"/>
<dbReference type="PhylomeDB" id="Q9VB74"/>
<dbReference type="Reactome" id="R-DME-72163">
    <property type="pathway name" value="mRNA Splicing - Major Pathway"/>
</dbReference>
<dbReference type="BioGRID-ORCS" id="43267">
    <property type="hits" value="0 hits in 3 CRISPR screens"/>
</dbReference>
<dbReference type="GenomeRNAi" id="43267"/>
<dbReference type="PRO" id="PR:Q9VB74"/>
<dbReference type="Proteomes" id="UP000000803">
    <property type="component" value="Chromosome 3R"/>
</dbReference>
<dbReference type="Bgee" id="FBgn0039488">
    <property type="expression patterns" value="Expressed in adult tracheocyte (Drosophila) in open tracheal system trachea and 116 other cell types or tissues"/>
</dbReference>
<dbReference type="GO" id="GO:0071013">
    <property type="term" value="C:catalytic step 2 spliceosome"/>
    <property type="evidence" value="ECO:0007005"/>
    <property type="project" value="FlyBase"/>
</dbReference>
<dbReference type="GO" id="GO:0005634">
    <property type="term" value="C:nucleus"/>
    <property type="evidence" value="ECO:0000314"/>
    <property type="project" value="FlyBase"/>
</dbReference>
<dbReference type="GO" id="GO:0003682">
    <property type="term" value="F:chromatin binding"/>
    <property type="evidence" value="ECO:0007669"/>
    <property type="project" value="InterPro"/>
</dbReference>
<dbReference type="GO" id="GO:0000398">
    <property type="term" value="P:mRNA splicing, via spliceosome"/>
    <property type="evidence" value="ECO:0000305"/>
    <property type="project" value="FlyBase"/>
</dbReference>
<dbReference type="GO" id="GO:0010468">
    <property type="term" value="P:regulation of gene expression"/>
    <property type="evidence" value="ECO:0000318"/>
    <property type="project" value="GO_Central"/>
</dbReference>
<dbReference type="InterPro" id="IPR040466">
    <property type="entry name" value="NKAP"/>
</dbReference>
<dbReference type="InterPro" id="IPR009269">
    <property type="entry name" value="NKAP_C"/>
</dbReference>
<dbReference type="PANTHER" id="PTHR13087">
    <property type="entry name" value="NF-KAPPA B ACTIVATING PROTEIN"/>
    <property type="match status" value="1"/>
</dbReference>
<dbReference type="PANTHER" id="PTHR13087:SF0">
    <property type="entry name" value="NFKB ACTIVATING PROTEIN LIKE"/>
    <property type="match status" value="1"/>
</dbReference>
<dbReference type="Pfam" id="PF06047">
    <property type="entry name" value="Nkap_C"/>
    <property type="match status" value="1"/>
</dbReference>